<evidence type="ECO:0000255" key="1">
    <source>
        <dbReference type="HAMAP-Rule" id="MF_00079"/>
    </source>
</evidence>
<gene>
    <name evidence="1" type="primary">hisG</name>
    <name type="ordered locus">Geob_2088</name>
</gene>
<feature type="chain" id="PRO_1000118253" description="ATP phosphoribosyltransferase">
    <location>
        <begin position="1"/>
        <end position="291"/>
    </location>
</feature>
<keyword id="KW-0028">Amino-acid biosynthesis</keyword>
<keyword id="KW-0067">ATP-binding</keyword>
<keyword id="KW-0963">Cytoplasm</keyword>
<keyword id="KW-0328">Glycosyltransferase</keyword>
<keyword id="KW-0368">Histidine biosynthesis</keyword>
<keyword id="KW-0460">Magnesium</keyword>
<keyword id="KW-0479">Metal-binding</keyword>
<keyword id="KW-0547">Nucleotide-binding</keyword>
<keyword id="KW-1185">Reference proteome</keyword>
<keyword id="KW-0808">Transferase</keyword>
<reference key="1">
    <citation type="submission" date="2009-01" db="EMBL/GenBank/DDBJ databases">
        <title>Complete sequence of Geobacter sp. FRC-32.</title>
        <authorList>
            <consortium name="US DOE Joint Genome Institute"/>
            <person name="Lucas S."/>
            <person name="Copeland A."/>
            <person name="Lapidus A."/>
            <person name="Glavina del Rio T."/>
            <person name="Dalin E."/>
            <person name="Tice H."/>
            <person name="Bruce D."/>
            <person name="Goodwin L."/>
            <person name="Pitluck S."/>
            <person name="Saunders E."/>
            <person name="Brettin T."/>
            <person name="Detter J.C."/>
            <person name="Han C."/>
            <person name="Larimer F."/>
            <person name="Land M."/>
            <person name="Hauser L."/>
            <person name="Kyrpides N."/>
            <person name="Ovchinnikova G."/>
            <person name="Kostka J."/>
            <person name="Richardson P."/>
        </authorList>
    </citation>
    <scope>NUCLEOTIDE SEQUENCE [LARGE SCALE GENOMIC DNA]</scope>
    <source>
        <strain>DSM 22248 / JCM 15807 / FRC-32</strain>
    </source>
</reference>
<proteinExistence type="inferred from homology"/>
<organism>
    <name type="scientific">Geotalea daltonii (strain DSM 22248 / JCM 15807 / FRC-32)</name>
    <name type="common">Geobacter daltonii</name>
    <dbReference type="NCBI Taxonomy" id="316067"/>
    <lineage>
        <taxon>Bacteria</taxon>
        <taxon>Pseudomonadati</taxon>
        <taxon>Thermodesulfobacteriota</taxon>
        <taxon>Desulfuromonadia</taxon>
        <taxon>Geobacterales</taxon>
        <taxon>Geobacteraceae</taxon>
        <taxon>Geotalea</taxon>
    </lineage>
</organism>
<comment type="function">
    <text evidence="1">Catalyzes the condensation of ATP and 5-phosphoribose 1-diphosphate to form N'-(5'-phosphoribosyl)-ATP (PR-ATP). Has a crucial role in the pathway because the rate of histidine biosynthesis seems to be controlled primarily by regulation of HisG enzymatic activity.</text>
</comment>
<comment type="catalytic activity">
    <reaction evidence="1">
        <text>1-(5-phospho-beta-D-ribosyl)-ATP + diphosphate = 5-phospho-alpha-D-ribose 1-diphosphate + ATP</text>
        <dbReference type="Rhea" id="RHEA:18473"/>
        <dbReference type="ChEBI" id="CHEBI:30616"/>
        <dbReference type="ChEBI" id="CHEBI:33019"/>
        <dbReference type="ChEBI" id="CHEBI:58017"/>
        <dbReference type="ChEBI" id="CHEBI:73183"/>
        <dbReference type="EC" id="2.4.2.17"/>
    </reaction>
</comment>
<comment type="cofactor">
    <cofactor evidence="1">
        <name>Mg(2+)</name>
        <dbReference type="ChEBI" id="CHEBI:18420"/>
    </cofactor>
</comment>
<comment type="activity regulation">
    <text evidence="1">Feedback inhibited by histidine.</text>
</comment>
<comment type="pathway">
    <text evidence="1">Amino-acid biosynthesis; L-histidine biosynthesis; L-histidine from 5-phospho-alpha-D-ribose 1-diphosphate: step 1/9.</text>
</comment>
<comment type="subcellular location">
    <subcellularLocation>
        <location evidence="1">Cytoplasm</location>
    </subcellularLocation>
</comment>
<comment type="similarity">
    <text evidence="1">Belongs to the ATP phosphoribosyltransferase family. Long subfamily.</text>
</comment>
<sequence length="291" mass="32144">MSDILKFGIPKGSLEDATVDLFAKAGWKISISSRSYFPGVDDAELNCKLIRPQEMGKYVERGTIDVGIAGRDWVRENDSDVVEVCEMVYSKVSRRPVRWVLVVAQDSKVQRPEDLAGATLSTELVGFTKRYFAERNIPVTVEFSWGATEAKVVDGLCDAIVEVTETGSTIRANNLRIVCDLMESVPVMIANRKSWEDPWKREKIETIATLLKSALAAEGMVGLKMNAPGDKADAITKVLPSQKAPTVSHLYNSDWVSIESILNEKEVRSIVPALLKLGAEGIVEYPLNKII</sequence>
<name>HIS1_GEODF</name>
<protein>
    <recommendedName>
        <fullName evidence="1">ATP phosphoribosyltransferase</fullName>
        <shortName evidence="1">ATP-PRT</shortName>
        <shortName evidence="1">ATP-PRTase</shortName>
        <ecNumber evidence="1">2.4.2.17</ecNumber>
    </recommendedName>
</protein>
<accession>B9M8U7</accession>
<dbReference type="EC" id="2.4.2.17" evidence="1"/>
<dbReference type="EMBL" id="CP001390">
    <property type="protein sequence ID" value="ACM20443.1"/>
    <property type="molecule type" value="Genomic_DNA"/>
</dbReference>
<dbReference type="RefSeq" id="WP_012647172.1">
    <property type="nucleotide sequence ID" value="NC_011979.1"/>
</dbReference>
<dbReference type="SMR" id="B9M8U7"/>
<dbReference type="STRING" id="316067.Geob_2088"/>
<dbReference type="KEGG" id="geo:Geob_2088"/>
<dbReference type="eggNOG" id="COG0040">
    <property type="taxonomic scope" value="Bacteria"/>
</dbReference>
<dbReference type="HOGENOM" id="CLU_038115_1_1_7"/>
<dbReference type="OrthoDB" id="9801867at2"/>
<dbReference type="UniPathway" id="UPA00031">
    <property type="reaction ID" value="UER00006"/>
</dbReference>
<dbReference type="Proteomes" id="UP000007721">
    <property type="component" value="Chromosome"/>
</dbReference>
<dbReference type="GO" id="GO:0005737">
    <property type="term" value="C:cytoplasm"/>
    <property type="evidence" value="ECO:0007669"/>
    <property type="project" value="UniProtKB-SubCell"/>
</dbReference>
<dbReference type="GO" id="GO:0005524">
    <property type="term" value="F:ATP binding"/>
    <property type="evidence" value="ECO:0007669"/>
    <property type="project" value="UniProtKB-KW"/>
</dbReference>
<dbReference type="GO" id="GO:0003879">
    <property type="term" value="F:ATP phosphoribosyltransferase activity"/>
    <property type="evidence" value="ECO:0007669"/>
    <property type="project" value="UniProtKB-UniRule"/>
</dbReference>
<dbReference type="GO" id="GO:0000287">
    <property type="term" value="F:magnesium ion binding"/>
    <property type="evidence" value="ECO:0007669"/>
    <property type="project" value="UniProtKB-UniRule"/>
</dbReference>
<dbReference type="GO" id="GO:0000105">
    <property type="term" value="P:L-histidine biosynthetic process"/>
    <property type="evidence" value="ECO:0007669"/>
    <property type="project" value="UniProtKB-UniRule"/>
</dbReference>
<dbReference type="CDD" id="cd13593">
    <property type="entry name" value="PBP2_HisGL3"/>
    <property type="match status" value="1"/>
</dbReference>
<dbReference type="FunFam" id="3.30.70.120:FF:000002">
    <property type="entry name" value="ATP phosphoribosyltransferase"/>
    <property type="match status" value="1"/>
</dbReference>
<dbReference type="FunFam" id="3.40.190.10:FF:000258">
    <property type="entry name" value="ATP phosphoribosyltransferase"/>
    <property type="match status" value="1"/>
</dbReference>
<dbReference type="Gene3D" id="3.30.70.120">
    <property type="match status" value="1"/>
</dbReference>
<dbReference type="Gene3D" id="3.40.190.10">
    <property type="entry name" value="Periplasmic binding protein-like II"/>
    <property type="match status" value="2"/>
</dbReference>
<dbReference type="HAMAP" id="MF_00079">
    <property type="entry name" value="HisG_Long"/>
    <property type="match status" value="1"/>
</dbReference>
<dbReference type="InterPro" id="IPR020621">
    <property type="entry name" value="ATP-PRT_HisG_long"/>
</dbReference>
<dbReference type="InterPro" id="IPR013820">
    <property type="entry name" value="ATP_PRibTrfase_cat"/>
</dbReference>
<dbReference type="InterPro" id="IPR001348">
    <property type="entry name" value="ATP_PRibTrfase_HisG"/>
</dbReference>
<dbReference type="InterPro" id="IPR013115">
    <property type="entry name" value="HisG_C"/>
</dbReference>
<dbReference type="InterPro" id="IPR011322">
    <property type="entry name" value="N-reg_PII-like_a/b"/>
</dbReference>
<dbReference type="InterPro" id="IPR015867">
    <property type="entry name" value="N-reg_PII/ATP_PRibTrfase_C"/>
</dbReference>
<dbReference type="NCBIfam" id="TIGR00070">
    <property type="entry name" value="hisG"/>
    <property type="match status" value="1"/>
</dbReference>
<dbReference type="NCBIfam" id="TIGR03455">
    <property type="entry name" value="HisG_C-term"/>
    <property type="match status" value="1"/>
</dbReference>
<dbReference type="PANTHER" id="PTHR21403:SF10">
    <property type="entry name" value="ATP PHOSPHORIBOSYLTRANSFERASE"/>
    <property type="match status" value="1"/>
</dbReference>
<dbReference type="PANTHER" id="PTHR21403">
    <property type="entry name" value="ATP PHOSPHORIBOSYLTRANSFERASE ATP-PRTASE"/>
    <property type="match status" value="1"/>
</dbReference>
<dbReference type="Pfam" id="PF01634">
    <property type="entry name" value="HisG"/>
    <property type="match status" value="1"/>
</dbReference>
<dbReference type="Pfam" id="PF08029">
    <property type="entry name" value="HisG_C"/>
    <property type="match status" value="1"/>
</dbReference>
<dbReference type="SUPFAM" id="SSF54913">
    <property type="entry name" value="GlnB-like"/>
    <property type="match status" value="1"/>
</dbReference>
<dbReference type="SUPFAM" id="SSF53850">
    <property type="entry name" value="Periplasmic binding protein-like II"/>
    <property type="match status" value="1"/>
</dbReference>